<comment type="function">
    <text evidence="1">Catalyzes the addition of meso-diaminopimelic acid to the nucleotide precursor UDP-N-acetylmuramoyl-L-alanyl-D-glutamate (UMAG) in the biosynthesis of bacterial cell-wall peptidoglycan.</text>
</comment>
<comment type="catalytic activity">
    <reaction evidence="1">
        <text>UDP-N-acetyl-alpha-D-muramoyl-L-alanyl-D-glutamate + meso-2,6-diaminopimelate + ATP = UDP-N-acetyl-alpha-D-muramoyl-L-alanyl-gamma-D-glutamyl-meso-2,6-diaminopimelate + ADP + phosphate + H(+)</text>
        <dbReference type="Rhea" id="RHEA:23676"/>
        <dbReference type="ChEBI" id="CHEBI:15378"/>
        <dbReference type="ChEBI" id="CHEBI:30616"/>
        <dbReference type="ChEBI" id="CHEBI:43474"/>
        <dbReference type="ChEBI" id="CHEBI:57791"/>
        <dbReference type="ChEBI" id="CHEBI:83900"/>
        <dbReference type="ChEBI" id="CHEBI:83905"/>
        <dbReference type="ChEBI" id="CHEBI:456216"/>
        <dbReference type="EC" id="6.3.2.13"/>
    </reaction>
</comment>
<comment type="cofactor">
    <cofactor evidence="1">
        <name>Mg(2+)</name>
        <dbReference type="ChEBI" id="CHEBI:18420"/>
    </cofactor>
</comment>
<comment type="pathway">
    <text evidence="1">Cell wall biogenesis; peptidoglycan biosynthesis.</text>
</comment>
<comment type="subcellular location">
    <subcellularLocation>
        <location evidence="1">Cytoplasm</location>
    </subcellularLocation>
</comment>
<comment type="PTM">
    <text evidence="1">Carboxylation is probably crucial for Mg(2+) binding and, consequently, for the gamma-phosphate positioning of ATP.</text>
</comment>
<comment type="similarity">
    <text evidence="1">Belongs to the MurCDEF family. MurE subfamily.</text>
</comment>
<reference key="1">
    <citation type="journal article" date="2001" name="DNA Res.">
        <title>Complete genomic sequence of the filamentous nitrogen-fixing cyanobacterium Anabaena sp. strain PCC 7120.</title>
        <authorList>
            <person name="Kaneko T."/>
            <person name="Nakamura Y."/>
            <person name="Wolk C.P."/>
            <person name="Kuritz T."/>
            <person name="Sasamoto S."/>
            <person name="Watanabe A."/>
            <person name="Iriguchi M."/>
            <person name="Ishikawa A."/>
            <person name="Kawashima K."/>
            <person name="Kimura T."/>
            <person name="Kishida Y."/>
            <person name="Kohara M."/>
            <person name="Matsumoto M."/>
            <person name="Matsuno A."/>
            <person name="Muraki A."/>
            <person name="Nakazaki N."/>
            <person name="Shimpo S."/>
            <person name="Sugimoto M."/>
            <person name="Takazawa M."/>
            <person name="Yamada M."/>
            <person name="Yasuda M."/>
            <person name="Tabata S."/>
        </authorList>
    </citation>
    <scope>NUCLEOTIDE SEQUENCE [LARGE SCALE GENOMIC DNA]</scope>
    <source>
        <strain>PCC 7120 / SAG 25.82 / UTEX 2576</strain>
    </source>
</reference>
<dbReference type="EC" id="6.3.2.13" evidence="1"/>
<dbReference type="EMBL" id="BA000019">
    <property type="protein sequence ID" value="BAB78029.1"/>
    <property type="molecule type" value="Genomic_DNA"/>
</dbReference>
<dbReference type="PIR" id="AI2013">
    <property type="entry name" value="AI2013"/>
</dbReference>
<dbReference type="RefSeq" id="WP_010995832.1">
    <property type="nucleotide sequence ID" value="NZ_RSCN01000013.1"/>
</dbReference>
<dbReference type="SMR" id="Q8YWF0"/>
<dbReference type="STRING" id="103690.gene:10493680"/>
<dbReference type="KEGG" id="ana:all1663"/>
<dbReference type="eggNOG" id="COG0769">
    <property type="taxonomic scope" value="Bacteria"/>
</dbReference>
<dbReference type="OrthoDB" id="9800958at2"/>
<dbReference type="UniPathway" id="UPA00219"/>
<dbReference type="Proteomes" id="UP000002483">
    <property type="component" value="Chromosome"/>
</dbReference>
<dbReference type="GO" id="GO:0005737">
    <property type="term" value="C:cytoplasm"/>
    <property type="evidence" value="ECO:0007669"/>
    <property type="project" value="UniProtKB-SubCell"/>
</dbReference>
<dbReference type="GO" id="GO:0005524">
    <property type="term" value="F:ATP binding"/>
    <property type="evidence" value="ECO:0007669"/>
    <property type="project" value="UniProtKB-UniRule"/>
</dbReference>
<dbReference type="GO" id="GO:0000287">
    <property type="term" value="F:magnesium ion binding"/>
    <property type="evidence" value="ECO:0007669"/>
    <property type="project" value="UniProtKB-UniRule"/>
</dbReference>
<dbReference type="GO" id="GO:0008765">
    <property type="term" value="F:UDP-N-acetylmuramoylalanyl-D-glutamate-2,6-diaminopimelate ligase activity"/>
    <property type="evidence" value="ECO:0007669"/>
    <property type="project" value="UniProtKB-UniRule"/>
</dbReference>
<dbReference type="GO" id="GO:0051301">
    <property type="term" value="P:cell division"/>
    <property type="evidence" value="ECO:0007669"/>
    <property type="project" value="UniProtKB-KW"/>
</dbReference>
<dbReference type="GO" id="GO:0071555">
    <property type="term" value="P:cell wall organization"/>
    <property type="evidence" value="ECO:0007669"/>
    <property type="project" value="UniProtKB-KW"/>
</dbReference>
<dbReference type="GO" id="GO:0009252">
    <property type="term" value="P:peptidoglycan biosynthetic process"/>
    <property type="evidence" value="ECO:0007669"/>
    <property type="project" value="UniProtKB-UniRule"/>
</dbReference>
<dbReference type="GO" id="GO:0008360">
    <property type="term" value="P:regulation of cell shape"/>
    <property type="evidence" value="ECO:0007669"/>
    <property type="project" value="UniProtKB-KW"/>
</dbReference>
<dbReference type="FunFam" id="3.90.190.20:FF:000006">
    <property type="entry name" value="UDP-N-acetylmuramoyl-L-alanyl-D-glutamate--2,6-diaminopimelate ligase"/>
    <property type="match status" value="1"/>
</dbReference>
<dbReference type="Gene3D" id="3.90.190.20">
    <property type="entry name" value="Mur ligase, C-terminal domain"/>
    <property type="match status" value="1"/>
</dbReference>
<dbReference type="Gene3D" id="3.40.1190.10">
    <property type="entry name" value="Mur-like, catalytic domain"/>
    <property type="match status" value="1"/>
</dbReference>
<dbReference type="Gene3D" id="3.40.1390.10">
    <property type="entry name" value="MurE/MurF, N-terminal domain"/>
    <property type="match status" value="1"/>
</dbReference>
<dbReference type="HAMAP" id="MF_00208">
    <property type="entry name" value="MurE"/>
    <property type="match status" value="1"/>
</dbReference>
<dbReference type="InterPro" id="IPR036565">
    <property type="entry name" value="Mur-like_cat_sf"/>
</dbReference>
<dbReference type="InterPro" id="IPR004101">
    <property type="entry name" value="Mur_ligase_C"/>
</dbReference>
<dbReference type="InterPro" id="IPR036615">
    <property type="entry name" value="Mur_ligase_C_dom_sf"/>
</dbReference>
<dbReference type="InterPro" id="IPR013221">
    <property type="entry name" value="Mur_ligase_cen"/>
</dbReference>
<dbReference type="InterPro" id="IPR000713">
    <property type="entry name" value="Mur_ligase_N"/>
</dbReference>
<dbReference type="InterPro" id="IPR035911">
    <property type="entry name" value="MurE/MurF_N"/>
</dbReference>
<dbReference type="InterPro" id="IPR005761">
    <property type="entry name" value="UDP-N-AcMur-Glu-dNH2Pim_ligase"/>
</dbReference>
<dbReference type="NCBIfam" id="TIGR01085">
    <property type="entry name" value="murE"/>
    <property type="match status" value="1"/>
</dbReference>
<dbReference type="NCBIfam" id="NF001124">
    <property type="entry name" value="PRK00139.1-2"/>
    <property type="match status" value="1"/>
</dbReference>
<dbReference type="NCBIfam" id="NF001126">
    <property type="entry name" value="PRK00139.1-4"/>
    <property type="match status" value="1"/>
</dbReference>
<dbReference type="PANTHER" id="PTHR23135">
    <property type="entry name" value="MUR LIGASE FAMILY MEMBER"/>
    <property type="match status" value="1"/>
</dbReference>
<dbReference type="PANTHER" id="PTHR23135:SF4">
    <property type="entry name" value="UDP-N-ACETYLMURAMOYL-L-ALANYL-D-GLUTAMATE--2,6-DIAMINOPIMELATE LIGASE MURE HOMOLOG, CHLOROPLASTIC"/>
    <property type="match status" value="1"/>
</dbReference>
<dbReference type="Pfam" id="PF01225">
    <property type="entry name" value="Mur_ligase"/>
    <property type="match status" value="1"/>
</dbReference>
<dbReference type="Pfam" id="PF02875">
    <property type="entry name" value="Mur_ligase_C"/>
    <property type="match status" value="1"/>
</dbReference>
<dbReference type="Pfam" id="PF08245">
    <property type="entry name" value="Mur_ligase_M"/>
    <property type="match status" value="1"/>
</dbReference>
<dbReference type="SUPFAM" id="SSF53623">
    <property type="entry name" value="MurD-like peptide ligases, catalytic domain"/>
    <property type="match status" value="1"/>
</dbReference>
<dbReference type="SUPFAM" id="SSF53244">
    <property type="entry name" value="MurD-like peptide ligases, peptide-binding domain"/>
    <property type="match status" value="1"/>
</dbReference>
<dbReference type="SUPFAM" id="SSF63418">
    <property type="entry name" value="MurE/MurF N-terminal domain"/>
    <property type="match status" value="1"/>
</dbReference>
<protein>
    <recommendedName>
        <fullName evidence="1">UDP-N-acetylmuramoyl-L-alanyl-D-glutamate--2,6-diaminopimelate ligase</fullName>
        <ecNumber evidence="1">6.3.2.13</ecNumber>
    </recommendedName>
    <alternativeName>
        <fullName evidence="1">Meso-A2pm-adding enzyme</fullName>
    </alternativeName>
    <alternativeName>
        <fullName evidence="1">Meso-diaminopimelate-adding enzyme</fullName>
    </alternativeName>
    <alternativeName>
        <fullName evidence="1">UDP-MurNAc-L-Ala-D-Glu:meso-diaminopimelate ligase</fullName>
    </alternativeName>
    <alternativeName>
        <fullName evidence="1">UDP-MurNAc-tripeptide synthetase</fullName>
    </alternativeName>
    <alternativeName>
        <fullName evidence="1">UDP-N-acetylmuramyl-tripeptide synthetase</fullName>
    </alternativeName>
</protein>
<evidence type="ECO:0000255" key="1">
    <source>
        <dbReference type="HAMAP-Rule" id="MF_00208"/>
    </source>
</evidence>
<name>MURE_NOSS1</name>
<proteinExistence type="inferred from homology"/>
<feature type="chain" id="PRO_0000101861" description="UDP-N-acetylmuramoyl-L-alanyl-D-glutamate--2,6-diaminopimelate ligase">
    <location>
        <begin position="1"/>
        <end position="496"/>
    </location>
</feature>
<feature type="short sequence motif" description="Meso-diaminopimelate recognition motif">
    <location>
        <begin position="413"/>
        <end position="416"/>
    </location>
</feature>
<feature type="binding site" evidence="1">
    <location>
        <position position="32"/>
    </location>
    <ligand>
        <name>UDP-N-acetyl-alpha-D-muramoyl-L-alanyl-D-glutamate</name>
        <dbReference type="ChEBI" id="CHEBI:83900"/>
    </ligand>
</feature>
<feature type="binding site" evidence="1">
    <location>
        <begin position="116"/>
        <end position="122"/>
    </location>
    <ligand>
        <name>ATP</name>
        <dbReference type="ChEBI" id="CHEBI:30616"/>
    </ligand>
</feature>
<feature type="binding site" evidence="1">
    <location>
        <begin position="158"/>
        <end position="159"/>
    </location>
    <ligand>
        <name>UDP-N-acetyl-alpha-D-muramoyl-L-alanyl-D-glutamate</name>
        <dbReference type="ChEBI" id="CHEBI:83900"/>
    </ligand>
</feature>
<feature type="binding site" evidence="1">
    <location>
        <position position="185"/>
    </location>
    <ligand>
        <name>UDP-N-acetyl-alpha-D-muramoyl-L-alanyl-D-glutamate</name>
        <dbReference type="ChEBI" id="CHEBI:83900"/>
    </ligand>
</feature>
<feature type="binding site" evidence="1">
    <location>
        <position position="191"/>
    </location>
    <ligand>
        <name>UDP-N-acetyl-alpha-D-muramoyl-L-alanyl-D-glutamate</name>
        <dbReference type="ChEBI" id="CHEBI:83900"/>
    </ligand>
</feature>
<feature type="binding site" evidence="1">
    <location>
        <position position="193"/>
    </location>
    <ligand>
        <name>UDP-N-acetyl-alpha-D-muramoyl-L-alanyl-D-glutamate</name>
        <dbReference type="ChEBI" id="CHEBI:83900"/>
    </ligand>
</feature>
<feature type="binding site" evidence="1">
    <location>
        <position position="389"/>
    </location>
    <ligand>
        <name>meso-2,6-diaminopimelate</name>
        <dbReference type="ChEBI" id="CHEBI:57791"/>
    </ligand>
</feature>
<feature type="binding site" evidence="1">
    <location>
        <begin position="413"/>
        <end position="416"/>
    </location>
    <ligand>
        <name>meso-2,6-diaminopimelate</name>
        <dbReference type="ChEBI" id="CHEBI:57791"/>
    </ligand>
</feature>
<feature type="binding site" evidence="1">
    <location>
        <position position="464"/>
    </location>
    <ligand>
        <name>meso-2,6-diaminopimelate</name>
        <dbReference type="ChEBI" id="CHEBI:57791"/>
    </ligand>
</feature>
<feature type="binding site" evidence="1">
    <location>
        <position position="468"/>
    </location>
    <ligand>
        <name>meso-2,6-diaminopimelate</name>
        <dbReference type="ChEBI" id="CHEBI:57791"/>
    </ligand>
</feature>
<feature type="modified residue" description="N6-carboxylysine" evidence="1">
    <location>
        <position position="225"/>
    </location>
</feature>
<gene>
    <name evidence="1" type="primary">murE</name>
    <name type="ordered locus">all1663</name>
</gene>
<keyword id="KW-0067">ATP-binding</keyword>
<keyword id="KW-0131">Cell cycle</keyword>
<keyword id="KW-0132">Cell division</keyword>
<keyword id="KW-0133">Cell shape</keyword>
<keyword id="KW-0961">Cell wall biogenesis/degradation</keyword>
<keyword id="KW-0963">Cytoplasm</keyword>
<keyword id="KW-0436">Ligase</keyword>
<keyword id="KW-0460">Magnesium</keyword>
<keyword id="KW-0547">Nucleotide-binding</keyword>
<keyword id="KW-0573">Peptidoglycan synthesis</keyword>
<keyword id="KW-1185">Reference proteome</keyword>
<organism>
    <name type="scientific">Nostoc sp. (strain PCC 7120 / SAG 25.82 / UTEX 2576)</name>
    <dbReference type="NCBI Taxonomy" id="103690"/>
    <lineage>
        <taxon>Bacteria</taxon>
        <taxon>Bacillati</taxon>
        <taxon>Cyanobacteriota</taxon>
        <taxon>Cyanophyceae</taxon>
        <taxon>Nostocales</taxon>
        <taxon>Nostocaceae</taxon>
        <taxon>Nostoc</taxon>
    </lineage>
</organism>
<accession>Q8YWF0</accession>
<sequence length="496" mass="53474">MKLRELLATVDSVENLPPVLADAEVKGIKTNSHACGAGDLFIGMPGTRVDGGEFWPSAIASGAIAAIVSPQAVEKNPPHDEAVVISSNNMTKACAAIAAAFYGYPGQKLKLVGVTGTNGKTTTTHLIEFFLTKAKLSTALMGTLYTRWPGFEQTATHTTPFAVELQQQLAQAVNAGCEFGVMEVSSHALAQGRVLGCPFEVGVFSNLTQDHLDYHSDMEDYFAAKALLFSPEYLKGRAIINADDTYGQRLIKALSPEKVWSYSVNDSSADLWMSDLSYEPNGVTGTIHTPEGNVSFRSPLVGQYNLENLLAAVGAVLHLGLNLQLIANAIPEFPGVPGRMERVQINPDQDISVIVDYAHTPDSLENLLKAARPFIPGRMICVFGCGGDRDRTKRPKMGKIVAELADLAFVTSDNPRTEDPDRILDDILAGIPDTVQPTVIGDRAIAIRTAILQAQPGDGVLLAGKGHEDYQILGTEKIHFDDREHARAALTEREKL</sequence>